<evidence type="ECO:0000255" key="1">
    <source>
        <dbReference type="HAMAP-Rule" id="MF_00251"/>
    </source>
</evidence>
<evidence type="ECO:0000305" key="2"/>
<comment type="similarity">
    <text evidence="1">Belongs to the bacterial ribosomal protein bL36 family.</text>
</comment>
<sequence>MKVRKSLRSLKNKPGAQVVRRRGKVYVINKKDPRFKARQG</sequence>
<reference key="1">
    <citation type="journal article" date="2003" name="Nucleic Acids Res.">
        <title>The complete genome sequence and analysis of Corynebacterium diphtheriae NCTC13129.</title>
        <authorList>
            <person name="Cerdeno-Tarraga A.-M."/>
            <person name="Efstratiou A."/>
            <person name="Dover L.G."/>
            <person name="Holden M.T.G."/>
            <person name="Pallen M.J."/>
            <person name="Bentley S.D."/>
            <person name="Besra G.S."/>
            <person name="Churcher C.M."/>
            <person name="James K.D."/>
            <person name="De Zoysa A."/>
            <person name="Chillingworth T."/>
            <person name="Cronin A."/>
            <person name="Dowd L."/>
            <person name="Feltwell T."/>
            <person name="Hamlin N."/>
            <person name="Holroyd S."/>
            <person name="Jagels K."/>
            <person name="Moule S."/>
            <person name="Quail M.A."/>
            <person name="Rabbinowitsch E."/>
            <person name="Rutherford K.M."/>
            <person name="Thomson N.R."/>
            <person name="Unwin L."/>
            <person name="Whitehead S."/>
            <person name="Barrell B.G."/>
            <person name="Parkhill J."/>
        </authorList>
    </citation>
    <scope>NUCLEOTIDE SEQUENCE [LARGE SCALE GENOMIC DNA]</scope>
    <source>
        <strain>ATCC 700971 / NCTC 13129 / Biotype gravis</strain>
    </source>
</reference>
<feature type="chain" id="PRO_0000126177" description="Large ribosomal subunit protein bL36">
    <location>
        <begin position="1"/>
        <end position="40"/>
    </location>
</feature>
<protein>
    <recommendedName>
        <fullName evidence="1">Large ribosomal subunit protein bL36</fullName>
    </recommendedName>
    <alternativeName>
        <fullName evidence="2">50S ribosomal protein L36</fullName>
    </alternativeName>
</protein>
<organism>
    <name type="scientific">Corynebacterium diphtheriae (strain ATCC 700971 / NCTC 13129 / Biotype gravis)</name>
    <dbReference type="NCBI Taxonomy" id="257309"/>
    <lineage>
        <taxon>Bacteria</taxon>
        <taxon>Bacillati</taxon>
        <taxon>Actinomycetota</taxon>
        <taxon>Actinomycetes</taxon>
        <taxon>Mycobacteriales</taxon>
        <taxon>Corynebacteriaceae</taxon>
        <taxon>Corynebacterium</taxon>
    </lineage>
</organism>
<gene>
    <name evidence="1" type="primary">rpmJ</name>
    <name type="ordered locus">DIP1872</name>
</gene>
<dbReference type="EMBL" id="BX248359">
    <property type="protein sequence ID" value="CAE50401.1"/>
    <property type="molecule type" value="Genomic_DNA"/>
</dbReference>
<dbReference type="SMR" id="Q6NFL5"/>
<dbReference type="STRING" id="257309.DIP1872"/>
<dbReference type="KEGG" id="cdi:DIP1872"/>
<dbReference type="HOGENOM" id="CLU_135723_3_1_11"/>
<dbReference type="Proteomes" id="UP000002198">
    <property type="component" value="Chromosome"/>
</dbReference>
<dbReference type="GO" id="GO:1990904">
    <property type="term" value="C:ribonucleoprotein complex"/>
    <property type="evidence" value="ECO:0007669"/>
    <property type="project" value="UniProtKB-KW"/>
</dbReference>
<dbReference type="GO" id="GO:0005840">
    <property type="term" value="C:ribosome"/>
    <property type="evidence" value="ECO:0007669"/>
    <property type="project" value="UniProtKB-KW"/>
</dbReference>
<dbReference type="GO" id="GO:0003735">
    <property type="term" value="F:structural constituent of ribosome"/>
    <property type="evidence" value="ECO:0007669"/>
    <property type="project" value="InterPro"/>
</dbReference>
<dbReference type="GO" id="GO:0006412">
    <property type="term" value="P:translation"/>
    <property type="evidence" value="ECO:0007669"/>
    <property type="project" value="UniProtKB-UniRule"/>
</dbReference>
<dbReference type="HAMAP" id="MF_00251">
    <property type="entry name" value="Ribosomal_bL36"/>
    <property type="match status" value="1"/>
</dbReference>
<dbReference type="InterPro" id="IPR000473">
    <property type="entry name" value="Ribosomal_bL36"/>
</dbReference>
<dbReference type="InterPro" id="IPR035977">
    <property type="entry name" value="Ribosomal_bL36_sp"/>
</dbReference>
<dbReference type="InterPro" id="IPR047621">
    <property type="entry name" value="Ribosomal_L36_bact"/>
</dbReference>
<dbReference type="NCBIfam" id="NF002021">
    <property type="entry name" value="PRK00831.1"/>
    <property type="match status" value="1"/>
</dbReference>
<dbReference type="PANTHER" id="PTHR47781">
    <property type="entry name" value="50S RIBOSOMAL PROTEIN L36 2"/>
    <property type="match status" value="1"/>
</dbReference>
<dbReference type="PANTHER" id="PTHR47781:SF1">
    <property type="entry name" value="LARGE RIBOSOMAL SUBUNIT PROTEIN BL36B"/>
    <property type="match status" value="1"/>
</dbReference>
<dbReference type="Pfam" id="PF00444">
    <property type="entry name" value="Ribosomal_L36"/>
    <property type="match status" value="1"/>
</dbReference>
<dbReference type="SUPFAM" id="SSF57840">
    <property type="entry name" value="Ribosomal protein L36"/>
    <property type="match status" value="1"/>
</dbReference>
<proteinExistence type="inferred from homology"/>
<name>RL36_CORDI</name>
<accession>Q6NFL5</accession>
<keyword id="KW-1185">Reference proteome</keyword>
<keyword id="KW-0687">Ribonucleoprotein</keyword>
<keyword id="KW-0689">Ribosomal protein</keyword>